<name>UPPP_SHEPC</name>
<feature type="chain" id="PRO_1000062814" description="Undecaprenyl-diphosphatase">
    <location>
        <begin position="1"/>
        <end position="266"/>
    </location>
</feature>
<feature type="transmembrane region" description="Helical" evidence="1">
    <location>
        <begin position="1"/>
        <end position="21"/>
    </location>
</feature>
<feature type="transmembrane region" description="Helical" evidence="1">
    <location>
        <begin position="39"/>
        <end position="59"/>
    </location>
</feature>
<feature type="transmembrane region" description="Helical" evidence="1">
    <location>
        <begin position="87"/>
        <end position="107"/>
    </location>
</feature>
<feature type="transmembrane region" description="Helical" evidence="1">
    <location>
        <begin position="111"/>
        <end position="131"/>
    </location>
</feature>
<feature type="transmembrane region" description="Helical" evidence="1">
    <location>
        <begin position="149"/>
        <end position="169"/>
    </location>
</feature>
<feature type="transmembrane region" description="Helical" evidence="1">
    <location>
        <begin position="183"/>
        <end position="203"/>
    </location>
</feature>
<feature type="transmembrane region" description="Helical" evidence="1">
    <location>
        <begin position="218"/>
        <end position="238"/>
    </location>
</feature>
<feature type="transmembrane region" description="Helical" evidence="1">
    <location>
        <begin position="246"/>
        <end position="266"/>
    </location>
</feature>
<accession>A4Y4F7</accession>
<gene>
    <name evidence="1" type="primary">uppP</name>
    <name type="ordered locus">Sputcn32_1112</name>
</gene>
<dbReference type="EC" id="3.6.1.27" evidence="1"/>
<dbReference type="EMBL" id="CP000681">
    <property type="protein sequence ID" value="ABP74840.1"/>
    <property type="molecule type" value="Genomic_DNA"/>
</dbReference>
<dbReference type="SMR" id="A4Y4F7"/>
<dbReference type="STRING" id="319224.Sputcn32_1112"/>
<dbReference type="KEGG" id="spc:Sputcn32_1112"/>
<dbReference type="eggNOG" id="COG1968">
    <property type="taxonomic scope" value="Bacteria"/>
</dbReference>
<dbReference type="HOGENOM" id="CLU_060296_1_0_6"/>
<dbReference type="GO" id="GO:0005886">
    <property type="term" value="C:plasma membrane"/>
    <property type="evidence" value="ECO:0007669"/>
    <property type="project" value="UniProtKB-SubCell"/>
</dbReference>
<dbReference type="GO" id="GO:0050380">
    <property type="term" value="F:undecaprenyl-diphosphatase activity"/>
    <property type="evidence" value="ECO:0007669"/>
    <property type="project" value="UniProtKB-UniRule"/>
</dbReference>
<dbReference type="GO" id="GO:0071555">
    <property type="term" value="P:cell wall organization"/>
    <property type="evidence" value="ECO:0007669"/>
    <property type="project" value="UniProtKB-KW"/>
</dbReference>
<dbReference type="GO" id="GO:0009252">
    <property type="term" value="P:peptidoglycan biosynthetic process"/>
    <property type="evidence" value="ECO:0007669"/>
    <property type="project" value="UniProtKB-KW"/>
</dbReference>
<dbReference type="GO" id="GO:0008360">
    <property type="term" value="P:regulation of cell shape"/>
    <property type="evidence" value="ECO:0007669"/>
    <property type="project" value="UniProtKB-KW"/>
</dbReference>
<dbReference type="GO" id="GO:0046677">
    <property type="term" value="P:response to antibiotic"/>
    <property type="evidence" value="ECO:0007669"/>
    <property type="project" value="UniProtKB-UniRule"/>
</dbReference>
<dbReference type="HAMAP" id="MF_01006">
    <property type="entry name" value="Undec_diphosphatase"/>
    <property type="match status" value="1"/>
</dbReference>
<dbReference type="InterPro" id="IPR003824">
    <property type="entry name" value="UppP"/>
</dbReference>
<dbReference type="NCBIfam" id="NF001393">
    <property type="entry name" value="PRK00281.2-4"/>
    <property type="match status" value="1"/>
</dbReference>
<dbReference type="NCBIfam" id="TIGR00753">
    <property type="entry name" value="undec_PP_bacA"/>
    <property type="match status" value="1"/>
</dbReference>
<dbReference type="PANTHER" id="PTHR30622">
    <property type="entry name" value="UNDECAPRENYL-DIPHOSPHATASE"/>
    <property type="match status" value="1"/>
</dbReference>
<dbReference type="PANTHER" id="PTHR30622:SF4">
    <property type="entry name" value="UNDECAPRENYL-DIPHOSPHATASE"/>
    <property type="match status" value="1"/>
</dbReference>
<dbReference type="Pfam" id="PF02673">
    <property type="entry name" value="BacA"/>
    <property type="match status" value="1"/>
</dbReference>
<evidence type="ECO:0000255" key="1">
    <source>
        <dbReference type="HAMAP-Rule" id="MF_01006"/>
    </source>
</evidence>
<organism>
    <name type="scientific">Shewanella putrefaciens (strain CN-32 / ATCC BAA-453)</name>
    <dbReference type="NCBI Taxonomy" id="319224"/>
    <lineage>
        <taxon>Bacteria</taxon>
        <taxon>Pseudomonadati</taxon>
        <taxon>Pseudomonadota</taxon>
        <taxon>Gammaproteobacteria</taxon>
        <taxon>Alteromonadales</taxon>
        <taxon>Shewanellaceae</taxon>
        <taxon>Shewanella</taxon>
    </lineage>
</organism>
<comment type="function">
    <text evidence="1">Catalyzes the dephosphorylation of undecaprenyl diphosphate (UPP). Confers resistance to bacitracin.</text>
</comment>
<comment type="catalytic activity">
    <reaction evidence="1">
        <text>di-trans,octa-cis-undecaprenyl diphosphate + H2O = di-trans,octa-cis-undecaprenyl phosphate + phosphate + H(+)</text>
        <dbReference type="Rhea" id="RHEA:28094"/>
        <dbReference type="ChEBI" id="CHEBI:15377"/>
        <dbReference type="ChEBI" id="CHEBI:15378"/>
        <dbReference type="ChEBI" id="CHEBI:43474"/>
        <dbReference type="ChEBI" id="CHEBI:58405"/>
        <dbReference type="ChEBI" id="CHEBI:60392"/>
        <dbReference type="EC" id="3.6.1.27"/>
    </reaction>
</comment>
<comment type="subcellular location">
    <subcellularLocation>
        <location evidence="1">Cell inner membrane</location>
        <topology evidence="1">Multi-pass membrane protein</topology>
    </subcellularLocation>
</comment>
<comment type="miscellaneous">
    <text>Bacitracin is thought to be involved in the inhibition of peptidoglycan synthesis by sequestering undecaprenyl diphosphate, thereby reducing the pool of lipid carrier available.</text>
</comment>
<comment type="similarity">
    <text evidence="1">Belongs to the UppP family.</text>
</comment>
<keyword id="KW-0046">Antibiotic resistance</keyword>
<keyword id="KW-0997">Cell inner membrane</keyword>
<keyword id="KW-1003">Cell membrane</keyword>
<keyword id="KW-0133">Cell shape</keyword>
<keyword id="KW-0961">Cell wall biogenesis/degradation</keyword>
<keyword id="KW-0378">Hydrolase</keyword>
<keyword id="KW-0472">Membrane</keyword>
<keyword id="KW-0573">Peptidoglycan synthesis</keyword>
<keyword id="KW-0812">Transmembrane</keyword>
<keyword id="KW-1133">Transmembrane helix</keyword>
<reference key="1">
    <citation type="submission" date="2007-04" db="EMBL/GenBank/DDBJ databases">
        <title>Complete sequence of Shewanella putrefaciens CN-32.</title>
        <authorList>
            <consortium name="US DOE Joint Genome Institute"/>
            <person name="Copeland A."/>
            <person name="Lucas S."/>
            <person name="Lapidus A."/>
            <person name="Barry K."/>
            <person name="Detter J.C."/>
            <person name="Glavina del Rio T."/>
            <person name="Hammon N."/>
            <person name="Israni S."/>
            <person name="Dalin E."/>
            <person name="Tice H."/>
            <person name="Pitluck S."/>
            <person name="Chain P."/>
            <person name="Malfatti S."/>
            <person name="Shin M."/>
            <person name="Vergez L."/>
            <person name="Schmutz J."/>
            <person name="Larimer F."/>
            <person name="Land M."/>
            <person name="Hauser L."/>
            <person name="Kyrpides N."/>
            <person name="Mikhailova N."/>
            <person name="Romine M.F."/>
            <person name="Fredrickson J."/>
            <person name="Tiedje J."/>
            <person name="Richardson P."/>
        </authorList>
    </citation>
    <scope>NUCLEOTIDE SEQUENCE [LARGE SCALE GENOMIC DNA]</scope>
    <source>
        <strain>CN-32 / ATCC BAA-453</strain>
    </source>
</reference>
<proteinExistence type="inferred from homology"/>
<sequence>MDTFQVIILALIQGLTEFLPISSSAHLILPAELLGWEDQGLSFDVAVNTGSLLAVVIYFRHELWNMFTAWIASIFKGKQSDDSKLAWWIILATLPAVFFGFMAKDFIETHLRSAEVIAVTTIVFGLLLWWADKMSHQDLTVYQTGWRKALLIGFAQALALIPGTSRSGATMTAALMLGLSRDAAARFSFLMSVPVSLGAAILVGKDLSESSLPIDYQALTLGTLVSFVAAYLCIHYFLKIISRMGMTPFVIYRLILGAVLCGFIFL</sequence>
<protein>
    <recommendedName>
        <fullName evidence="1">Undecaprenyl-diphosphatase</fullName>
        <ecNumber evidence="1">3.6.1.27</ecNumber>
    </recommendedName>
    <alternativeName>
        <fullName evidence="1">Bacitracin resistance protein</fullName>
    </alternativeName>
    <alternativeName>
        <fullName evidence="1">Undecaprenyl pyrophosphate phosphatase</fullName>
    </alternativeName>
</protein>